<proteinExistence type="evidence at protein level"/>
<comment type="function">
    <text evidence="2">Catalyzes the formation of dTDP-glucose, from dTTP and glucose 1-phosphate, as well as its pyrophosphorolysis.</text>
</comment>
<comment type="catalytic activity">
    <reaction evidence="2">
        <text>dTTP + alpha-D-glucose 1-phosphate + H(+) = dTDP-alpha-D-glucose + diphosphate</text>
        <dbReference type="Rhea" id="RHEA:15225"/>
        <dbReference type="ChEBI" id="CHEBI:15378"/>
        <dbReference type="ChEBI" id="CHEBI:33019"/>
        <dbReference type="ChEBI" id="CHEBI:37568"/>
        <dbReference type="ChEBI" id="CHEBI:57477"/>
        <dbReference type="ChEBI" id="CHEBI:58601"/>
        <dbReference type="EC" id="2.7.7.24"/>
    </reaction>
</comment>
<comment type="cofactor">
    <cofactor evidence="1">
        <name>Mg(2+)</name>
        <dbReference type="ChEBI" id="CHEBI:18420"/>
    </cofactor>
    <text evidence="1">Binds 1 Mg(2+) ion per subunit.</text>
</comment>
<comment type="pathway">
    <text evidence="2">Nucleotide-sugar biosynthesis; dTDP-4-acetamido-4,6-dideoxygalactose biosynthesis.</text>
</comment>
<comment type="pathway">
    <text evidence="2">Bacterial outer membrane biogenesis; enterobacterial common antigen biosynthesis.</text>
</comment>
<comment type="subunit">
    <text evidence="1">Homotetramer; arranged as a dimer of dimers.</text>
</comment>
<comment type="similarity">
    <text evidence="3">Belongs to the glucose-1-phosphate thymidylyltransferase family.</text>
</comment>
<keyword id="KW-0002">3D-structure</keyword>
<keyword id="KW-0270">Exopolysaccharide synthesis</keyword>
<keyword id="KW-0460">Magnesium</keyword>
<keyword id="KW-0479">Metal-binding</keyword>
<keyword id="KW-0548">Nucleotidyltransferase</keyword>
<keyword id="KW-1185">Reference proteome</keyword>
<keyword id="KW-0808">Transferase</keyword>
<accession>P61887</accession>
<accession>P27831</accession>
<accession>P76755</accession>
<accession>Q2M897</accession>
<feature type="chain" id="PRO_0000207992" description="Glucose-1-phosphate thymidylyltransferase 2">
    <location>
        <begin position="1"/>
        <end position="293"/>
    </location>
</feature>
<feature type="binding site" evidence="1">
    <location>
        <position position="108"/>
    </location>
    <ligand>
        <name>Mg(2+)</name>
        <dbReference type="ChEBI" id="CHEBI:18420"/>
    </ligand>
</feature>
<feature type="binding site" evidence="1">
    <location>
        <position position="223"/>
    </location>
    <ligand>
        <name>Mg(2+)</name>
        <dbReference type="ChEBI" id="CHEBI:18420"/>
    </ligand>
</feature>
<feature type="sequence conflict" description="In Ref. 1; AAA67589." evidence="3" ref="1">
    <original>I</original>
    <variation>M</variation>
    <location>
        <position position="5"/>
    </location>
</feature>
<feature type="sequence conflict" description="In Ref. 1; AAA67589." evidence="3" ref="1">
    <original>GS</original>
    <variation>VG</variation>
    <location>
        <begin position="68"/>
        <end position="69"/>
    </location>
</feature>
<feature type="sequence conflict" description="In Ref. 1; AAA67589." evidence="3" ref="1">
    <original>AT</original>
    <variation>P</variation>
    <location>
        <begin position="130"/>
        <end position="131"/>
    </location>
</feature>
<feature type="strand" evidence="4">
    <location>
        <begin position="2"/>
        <end position="6"/>
    </location>
</feature>
<feature type="helix" evidence="4">
    <location>
        <begin position="12"/>
        <end position="14"/>
    </location>
</feature>
<feature type="helix" evidence="4">
    <location>
        <begin position="15"/>
        <end position="18"/>
    </location>
</feature>
<feature type="helix" evidence="4">
    <location>
        <begin position="23"/>
        <end position="25"/>
    </location>
</feature>
<feature type="strand" evidence="4">
    <location>
        <begin position="26"/>
        <end position="28"/>
    </location>
</feature>
<feature type="helix" evidence="4">
    <location>
        <begin position="35"/>
        <end position="43"/>
    </location>
</feature>
<feature type="strand" evidence="4">
    <location>
        <begin position="48"/>
        <end position="53"/>
    </location>
</feature>
<feature type="turn" evidence="4">
    <location>
        <begin position="55"/>
        <end position="57"/>
    </location>
</feature>
<feature type="helix" evidence="4">
    <location>
        <begin position="58"/>
        <end position="65"/>
    </location>
</feature>
<feature type="helix" evidence="4">
    <location>
        <begin position="69"/>
        <end position="71"/>
    </location>
</feature>
<feature type="strand" evidence="4">
    <location>
        <begin position="74"/>
        <end position="79"/>
    </location>
</feature>
<feature type="helix" evidence="4">
    <location>
        <begin position="88"/>
        <end position="92"/>
    </location>
</feature>
<feature type="helix" evidence="4">
    <location>
        <begin position="94"/>
        <end position="97"/>
    </location>
</feature>
<feature type="strand" evidence="4">
    <location>
        <begin position="102"/>
        <end position="106"/>
    </location>
</feature>
<feature type="strand" evidence="4">
    <location>
        <begin position="109"/>
        <end position="112"/>
    </location>
</feature>
<feature type="helix" evidence="4">
    <location>
        <begin position="117"/>
        <end position="123"/>
    </location>
</feature>
<feature type="strand" evidence="4">
    <location>
        <begin position="128"/>
        <end position="136"/>
    </location>
</feature>
<feature type="strand" evidence="4">
    <location>
        <begin position="141"/>
        <end position="145"/>
    </location>
</feature>
<feature type="strand" evidence="4">
    <location>
        <begin position="147"/>
        <end position="149"/>
    </location>
</feature>
<feature type="strand" evidence="4">
    <location>
        <begin position="152"/>
        <end position="156"/>
    </location>
</feature>
<feature type="strand" evidence="4">
    <location>
        <begin position="167"/>
        <end position="175"/>
    </location>
</feature>
<feature type="helix" evidence="4">
    <location>
        <begin position="179"/>
        <end position="185"/>
    </location>
</feature>
<feature type="strand" evidence="4">
    <location>
        <begin position="191"/>
        <end position="194"/>
    </location>
</feature>
<feature type="helix" evidence="4">
    <location>
        <begin position="197"/>
        <end position="206"/>
    </location>
</feature>
<feature type="strand" evidence="4">
    <location>
        <begin position="210"/>
        <end position="214"/>
    </location>
</feature>
<feature type="strand" evidence="4">
    <location>
        <begin position="220"/>
        <end position="223"/>
    </location>
</feature>
<feature type="helix" evidence="4">
    <location>
        <begin position="227"/>
        <end position="244"/>
    </location>
</feature>
<feature type="helix" evidence="4">
    <location>
        <begin position="251"/>
        <end position="257"/>
    </location>
</feature>
<feature type="helix" evidence="4">
    <location>
        <begin position="263"/>
        <end position="272"/>
    </location>
</feature>
<feature type="turn" evidence="4">
    <location>
        <begin position="273"/>
        <end position="275"/>
    </location>
</feature>
<feature type="helix" evidence="4">
    <location>
        <begin position="277"/>
        <end position="284"/>
    </location>
</feature>
<sequence length="293" mass="32734">MKGIILAGGSGTRLHPITRGVSKQLLPIYDKPMIYYPLSVLMLAGIREILIITTPEDKGYFQRLLGDGSEFGIQLEYAEQPSPDGLAQAFIIGETFLNGEPSCLVLGDNIFFGQGFSPKLRHVAARTEGATVFGYQVMDPERFGVVEFDDNFRAISLEEKPKQPKSNWAVTGLYFYDSKVVEYAKQVKPSERGELEITSINQMYLEAGNLTVELLGRGFAWLDTGTHDSLIEASTFVQTVEKRQGFKIACLEEIAWRNGWLDDEGVKRAASSLAKTGYGQYLLELLRARPRQY</sequence>
<organism>
    <name type="scientific">Escherichia coli (strain K12)</name>
    <dbReference type="NCBI Taxonomy" id="83333"/>
    <lineage>
        <taxon>Bacteria</taxon>
        <taxon>Pseudomonadati</taxon>
        <taxon>Pseudomonadota</taxon>
        <taxon>Gammaproteobacteria</taxon>
        <taxon>Enterobacterales</taxon>
        <taxon>Enterobacteriaceae</taxon>
        <taxon>Escherichia</taxon>
    </lineage>
</organism>
<gene>
    <name type="primary">rffH</name>
    <name type="synonym">rmlA2</name>
    <name type="synonym">yifG</name>
    <name type="ordered locus">b3789</name>
    <name type="ordered locus">JW3763</name>
</gene>
<dbReference type="EC" id="2.7.7.24" evidence="2"/>
<dbReference type="EMBL" id="M87049">
    <property type="protein sequence ID" value="AAA67589.1"/>
    <property type="molecule type" value="Genomic_DNA"/>
</dbReference>
<dbReference type="EMBL" id="U00096">
    <property type="protein sequence ID" value="AAC76794.1"/>
    <property type="molecule type" value="Genomic_DNA"/>
</dbReference>
<dbReference type="EMBL" id="AP009048">
    <property type="protein sequence ID" value="BAE77509.1"/>
    <property type="molecule type" value="Genomic_DNA"/>
</dbReference>
<dbReference type="PIR" id="H65182">
    <property type="entry name" value="H65182"/>
</dbReference>
<dbReference type="RefSeq" id="NP_418236.1">
    <property type="nucleotide sequence ID" value="NC_000913.3"/>
</dbReference>
<dbReference type="PDB" id="1MC3">
    <property type="method" value="X-ray"/>
    <property type="resolution" value="2.60 A"/>
    <property type="chains" value="A/B=1-293"/>
</dbReference>
<dbReference type="PDBsum" id="1MC3"/>
<dbReference type="SMR" id="P61887"/>
<dbReference type="BioGRID" id="4261364">
    <property type="interactions" value="237"/>
</dbReference>
<dbReference type="DIP" id="DIP-10689N"/>
<dbReference type="FunCoup" id="P61887">
    <property type="interactions" value="606"/>
</dbReference>
<dbReference type="IntAct" id="P61887">
    <property type="interactions" value="5"/>
</dbReference>
<dbReference type="STRING" id="511145.b3789"/>
<dbReference type="jPOST" id="P61887"/>
<dbReference type="PaxDb" id="511145-b3789"/>
<dbReference type="EnsemblBacteria" id="AAC76794">
    <property type="protein sequence ID" value="AAC76794"/>
    <property type="gene ID" value="b3789"/>
</dbReference>
<dbReference type="GeneID" id="948299"/>
<dbReference type="KEGG" id="ecj:JW3763"/>
<dbReference type="KEGG" id="eco:b3789"/>
<dbReference type="KEGG" id="ecoc:C3026_20515"/>
<dbReference type="PATRIC" id="fig|1411691.4.peg.2917"/>
<dbReference type="EchoBASE" id="EB1423"/>
<dbReference type="eggNOG" id="COG1209">
    <property type="taxonomic scope" value="Bacteria"/>
</dbReference>
<dbReference type="HOGENOM" id="CLU_029499_9_0_6"/>
<dbReference type="InParanoid" id="P61887"/>
<dbReference type="OMA" id="AWRQGWI"/>
<dbReference type="OrthoDB" id="9803871at2"/>
<dbReference type="PhylomeDB" id="P61887"/>
<dbReference type="BioCyc" id="EcoCyc:DTDPGLUCOSEPP2-MONOMER"/>
<dbReference type="BioCyc" id="MetaCyc:DTDPGLUCOSEPP2-MONOMER"/>
<dbReference type="UniPathway" id="UPA00566"/>
<dbReference type="UniPathway" id="UPA00817"/>
<dbReference type="EvolutionaryTrace" id="P61887"/>
<dbReference type="PRO" id="PR:P61887"/>
<dbReference type="Proteomes" id="UP000000625">
    <property type="component" value="Chromosome"/>
</dbReference>
<dbReference type="GO" id="GO:0005829">
    <property type="term" value="C:cytosol"/>
    <property type="evidence" value="ECO:0000314"/>
    <property type="project" value="EcoCyc"/>
</dbReference>
<dbReference type="GO" id="GO:0008879">
    <property type="term" value="F:glucose-1-phosphate thymidylyltransferase activity"/>
    <property type="evidence" value="ECO:0000314"/>
    <property type="project" value="UniProtKB"/>
</dbReference>
<dbReference type="GO" id="GO:0042802">
    <property type="term" value="F:identical protein binding"/>
    <property type="evidence" value="ECO:0000314"/>
    <property type="project" value="EcoCyc"/>
</dbReference>
<dbReference type="GO" id="GO:0000287">
    <property type="term" value="F:magnesium ion binding"/>
    <property type="evidence" value="ECO:0000314"/>
    <property type="project" value="UniProtKB"/>
</dbReference>
<dbReference type="GO" id="GO:0009246">
    <property type="term" value="P:enterobacterial common antigen biosynthetic process"/>
    <property type="evidence" value="ECO:0007669"/>
    <property type="project" value="UniProtKB-UniPathway"/>
</dbReference>
<dbReference type="GO" id="GO:0009243">
    <property type="term" value="P:O antigen biosynthetic process"/>
    <property type="evidence" value="ECO:0000269"/>
    <property type="project" value="EcoCyc"/>
</dbReference>
<dbReference type="GO" id="GO:0000271">
    <property type="term" value="P:polysaccharide biosynthetic process"/>
    <property type="evidence" value="ECO:0000314"/>
    <property type="project" value="UniProtKB"/>
</dbReference>
<dbReference type="CDD" id="cd02538">
    <property type="entry name" value="G1P_TT_short"/>
    <property type="match status" value="1"/>
</dbReference>
<dbReference type="FunFam" id="3.90.550.10:FF:000023">
    <property type="entry name" value="Glucose-1-phosphate thymidylyltransferase"/>
    <property type="match status" value="1"/>
</dbReference>
<dbReference type="Gene3D" id="3.90.550.10">
    <property type="entry name" value="Spore Coat Polysaccharide Biosynthesis Protein SpsA, Chain A"/>
    <property type="match status" value="1"/>
</dbReference>
<dbReference type="InterPro" id="IPR005907">
    <property type="entry name" value="G1P_thy_trans_s"/>
</dbReference>
<dbReference type="InterPro" id="IPR005835">
    <property type="entry name" value="NTP_transferase_dom"/>
</dbReference>
<dbReference type="InterPro" id="IPR029044">
    <property type="entry name" value="Nucleotide-diphossugar_trans"/>
</dbReference>
<dbReference type="NCBIfam" id="TIGR01207">
    <property type="entry name" value="rmlA"/>
    <property type="match status" value="1"/>
</dbReference>
<dbReference type="PANTHER" id="PTHR43532">
    <property type="entry name" value="GLUCOSE-1-PHOSPHATE THYMIDYLYLTRANSFERASE"/>
    <property type="match status" value="1"/>
</dbReference>
<dbReference type="PANTHER" id="PTHR43532:SF4">
    <property type="entry name" value="GLUCOSE-1-PHOSPHATE THYMIDYLYLTRANSFERASE 2"/>
    <property type="match status" value="1"/>
</dbReference>
<dbReference type="Pfam" id="PF00483">
    <property type="entry name" value="NTP_transferase"/>
    <property type="match status" value="1"/>
</dbReference>
<dbReference type="SUPFAM" id="SSF53448">
    <property type="entry name" value="Nucleotide-diphospho-sugar transferases"/>
    <property type="match status" value="1"/>
</dbReference>
<reference key="1">
    <citation type="journal article" date="1992" name="Science">
        <title>Analysis of the Escherichia coli genome: DNA sequence of the region from 84.5 to 86.5 minutes.</title>
        <authorList>
            <person name="Daniels D.L."/>
            <person name="Plunkett G. III"/>
            <person name="Burland V.D."/>
            <person name="Blattner F.R."/>
        </authorList>
    </citation>
    <scope>NUCLEOTIDE SEQUENCE [LARGE SCALE GENOMIC DNA]</scope>
    <source>
        <strain>K12 / MG1655 / ATCC 47076</strain>
    </source>
</reference>
<reference key="2">
    <citation type="journal article" date="1997" name="Science">
        <title>The complete genome sequence of Escherichia coli K-12.</title>
        <authorList>
            <person name="Blattner F.R."/>
            <person name="Plunkett G. III"/>
            <person name="Bloch C.A."/>
            <person name="Perna N.T."/>
            <person name="Burland V."/>
            <person name="Riley M."/>
            <person name="Collado-Vides J."/>
            <person name="Glasner J.D."/>
            <person name="Rode C.K."/>
            <person name="Mayhew G.F."/>
            <person name="Gregor J."/>
            <person name="Davis N.W."/>
            <person name="Kirkpatrick H.A."/>
            <person name="Goeden M.A."/>
            <person name="Rose D.J."/>
            <person name="Mau B."/>
            <person name="Shao Y."/>
        </authorList>
    </citation>
    <scope>NUCLEOTIDE SEQUENCE [LARGE SCALE GENOMIC DNA]</scope>
    <source>
        <strain>K12 / MG1655 / ATCC 47076</strain>
    </source>
</reference>
<reference key="3">
    <citation type="journal article" date="2006" name="Mol. Syst. Biol.">
        <title>Highly accurate genome sequences of Escherichia coli K-12 strains MG1655 and W3110.</title>
        <authorList>
            <person name="Hayashi K."/>
            <person name="Morooka N."/>
            <person name="Yamamoto Y."/>
            <person name="Fujita K."/>
            <person name="Isono K."/>
            <person name="Choi S."/>
            <person name="Ohtsubo E."/>
            <person name="Baba T."/>
            <person name="Wanner B.L."/>
            <person name="Mori H."/>
            <person name="Horiuchi T."/>
        </authorList>
    </citation>
    <scope>NUCLEOTIDE SEQUENCE [LARGE SCALE GENOMIC DNA]</scope>
    <source>
        <strain>K12 / W3110 / ATCC 27325 / DSM 5911</strain>
    </source>
</reference>
<reference key="4">
    <citation type="journal article" date="1995" name="J. Bacteriol.">
        <title>Genetic analysis of the dTDP-rhamnose biosynthesis region of the Escherichia coli VW187 (O7:K1) rfb gene cluster: identification of functional homologs of rfbB and rfbA in the rff cluster and correct location of the rffE gene.</title>
        <authorList>
            <person name="Marolda C.L."/>
            <person name="Valvano M.A."/>
        </authorList>
    </citation>
    <scope>FUNCTION</scope>
    <scope>CATALYTIC ACTIVITY</scope>
    <scope>PATHWAY</scope>
    <source>
        <strain>K12</strain>
    </source>
</reference>
<reference key="5">
    <citation type="journal article" date="2002" name="J. Biol. Chem.">
        <title>Crystal structure of Escherichia coli glucose-1-phosphate thymidylyltransferase (RffH) complexed with dTTP and Mg2+.</title>
        <authorList>
            <person name="Sivaraman J."/>
            <person name="Sauve V."/>
            <person name="Matte A."/>
            <person name="Cygler M."/>
        </authorList>
    </citation>
    <scope>X-RAY CRYSTALLOGRAPHY (2.6 ANGSTROMS) OF COMPLEX WITH DTTP</scope>
    <scope>COFACTOR</scope>
    <scope>SUBUNIT</scope>
</reference>
<protein>
    <recommendedName>
        <fullName>Glucose-1-phosphate thymidylyltransferase 2</fullName>
        <shortName>G1P-TT 2</shortName>
        <ecNumber evidence="2">2.7.7.24</ecNumber>
    </recommendedName>
    <alternativeName>
        <fullName>dTDP-glucose pyrophosphorylase 2</fullName>
    </alternativeName>
    <alternativeName>
        <fullName>dTDP-glucose synthase 2</fullName>
    </alternativeName>
</protein>
<name>RMLA2_ECOLI</name>
<evidence type="ECO:0000269" key="1">
    <source>
    </source>
</evidence>
<evidence type="ECO:0000269" key="2">
    <source>
    </source>
</evidence>
<evidence type="ECO:0000305" key="3"/>
<evidence type="ECO:0007829" key="4">
    <source>
        <dbReference type="PDB" id="1MC3"/>
    </source>
</evidence>